<gene>
    <name evidence="1" type="primary">L1</name>
</gene>
<dbReference type="EMBL" id="D90400">
    <property type="protein sequence ID" value="BAA31851.1"/>
    <property type="molecule type" value="Genomic_DNA"/>
</dbReference>
<dbReference type="PIR" id="G36779">
    <property type="entry name" value="P1WL58"/>
</dbReference>
<dbReference type="PDB" id="5Y9C">
    <property type="method" value="X-ray"/>
    <property type="resolution" value="3.44 A"/>
    <property type="chains" value="A/B/C/D/E=36-524"/>
</dbReference>
<dbReference type="PDB" id="5Y9E">
    <property type="method" value="X-ray"/>
    <property type="resolution" value="2.04 A"/>
    <property type="chains" value="A/B/C/D/E=36-524"/>
</dbReference>
<dbReference type="PDB" id="6IGC">
    <property type="method" value="X-ray"/>
    <property type="resolution" value="3.50 A"/>
    <property type="chains" value="A/B/C/D/E/F/G/H/I/J/K/L/M/N/O/P/Q/R/S/T/U/V/W/X/Y/Z/a/b/c/d=1-524"/>
</dbReference>
<dbReference type="PDB" id="6IGD">
    <property type="method" value="X-ray"/>
    <property type="resolution" value="2.50 A"/>
    <property type="chains" value="A/B/C/D/E/F/G/H/I/J=1-524"/>
</dbReference>
<dbReference type="PDB" id="7DN5">
    <property type="method" value="EM"/>
    <property type="resolution" value="4.11 A"/>
    <property type="chains" value="A/B/C/D/E/F=1-524"/>
</dbReference>
<dbReference type="PDB" id="7DNH">
    <property type="method" value="EM"/>
    <property type="resolution" value="3.64 A"/>
    <property type="chains" value="A/B/C/D/E=1-524"/>
</dbReference>
<dbReference type="PDB" id="7DNK">
    <property type="method" value="EM"/>
    <property type="resolution" value="6.41 A"/>
    <property type="chains" value="A/B/C/D/E=1-524"/>
</dbReference>
<dbReference type="PDB" id="7DNL">
    <property type="method" value="EM"/>
    <property type="resolution" value="4.19 A"/>
    <property type="chains" value="A/B/C/D/E=1-524"/>
</dbReference>
<dbReference type="PDBsum" id="5Y9C"/>
<dbReference type="PDBsum" id="5Y9E"/>
<dbReference type="PDBsum" id="6IGC"/>
<dbReference type="PDBsum" id="6IGD"/>
<dbReference type="PDBsum" id="7DN5"/>
<dbReference type="PDBsum" id="7DNH"/>
<dbReference type="PDBsum" id="7DNK"/>
<dbReference type="PDBsum" id="7DNL"/>
<dbReference type="EMDB" id="EMD-30781"/>
<dbReference type="EMDB" id="EMD-30783"/>
<dbReference type="EMDB" id="EMD-30786"/>
<dbReference type="EMDB" id="EMD-30787"/>
<dbReference type="SMR" id="P26535"/>
<dbReference type="ChEMBL" id="CHEMBL3562173"/>
<dbReference type="ABCD" id="P26535">
    <property type="antibodies" value="3 sequenced antibodies"/>
</dbReference>
<dbReference type="Proteomes" id="UP000007668">
    <property type="component" value="Genome"/>
</dbReference>
<dbReference type="GO" id="GO:0042025">
    <property type="term" value="C:host cell nucleus"/>
    <property type="evidence" value="ECO:0007669"/>
    <property type="project" value="UniProtKB-SubCell"/>
</dbReference>
<dbReference type="GO" id="GO:0039620">
    <property type="term" value="C:T=7 icosahedral viral capsid"/>
    <property type="evidence" value="ECO:0007669"/>
    <property type="project" value="UniProtKB-UniRule"/>
</dbReference>
<dbReference type="GO" id="GO:0005198">
    <property type="term" value="F:structural molecule activity"/>
    <property type="evidence" value="ECO:0007669"/>
    <property type="project" value="UniProtKB-UniRule"/>
</dbReference>
<dbReference type="GO" id="GO:0075509">
    <property type="term" value="P:endocytosis involved in viral entry into host cell"/>
    <property type="evidence" value="ECO:0007669"/>
    <property type="project" value="UniProtKB-KW"/>
</dbReference>
<dbReference type="GO" id="GO:0019062">
    <property type="term" value="P:virion attachment to host cell"/>
    <property type="evidence" value="ECO:0007669"/>
    <property type="project" value="UniProtKB-UniRule"/>
</dbReference>
<dbReference type="Gene3D" id="2.60.175.20">
    <property type="entry name" value="Major capsid L1 (late) superfamily, Papillomavirus"/>
    <property type="match status" value="2"/>
</dbReference>
<dbReference type="HAMAP" id="MF_04002">
    <property type="entry name" value="PPV_L1"/>
    <property type="match status" value="1"/>
</dbReference>
<dbReference type="InterPro" id="IPR002210">
    <property type="entry name" value="Capsid_L1_Papillomavir"/>
</dbReference>
<dbReference type="InterPro" id="IPR036973">
    <property type="entry name" value="Capsid_L1_sf_Papillomavir"/>
</dbReference>
<dbReference type="InterPro" id="IPR011222">
    <property type="entry name" value="dsDNA_vir_gr_I_capsid"/>
</dbReference>
<dbReference type="Pfam" id="PF00500">
    <property type="entry name" value="Late_protein_L1"/>
    <property type="match status" value="1"/>
</dbReference>
<dbReference type="PRINTS" id="PR00865">
    <property type="entry name" value="HPVCAPSIDL1"/>
</dbReference>
<dbReference type="SUPFAM" id="SSF88648">
    <property type="entry name" value="Group I dsDNA viruses"/>
    <property type="match status" value="1"/>
</dbReference>
<organismHost>
    <name type="scientific">Homo sapiens</name>
    <name type="common">Human</name>
    <dbReference type="NCBI Taxonomy" id="9606"/>
</organismHost>
<evidence type="ECO:0000255" key="1">
    <source>
        <dbReference type="HAMAP-Rule" id="MF_04002"/>
    </source>
</evidence>
<evidence type="ECO:0000256" key="2">
    <source>
        <dbReference type="SAM" id="MobiDB-lite"/>
    </source>
</evidence>
<evidence type="ECO:0000269" key="3">
    <source>
    </source>
</evidence>
<evidence type="ECO:0007829" key="4">
    <source>
        <dbReference type="PDB" id="5Y9C"/>
    </source>
</evidence>
<evidence type="ECO:0007829" key="5">
    <source>
        <dbReference type="PDB" id="5Y9E"/>
    </source>
</evidence>
<evidence type="ECO:0007829" key="6">
    <source>
        <dbReference type="PDB" id="6IGD"/>
    </source>
</evidence>
<organism>
    <name type="scientific">Human papillomavirus 58</name>
    <dbReference type="NCBI Taxonomy" id="10598"/>
    <lineage>
        <taxon>Viruses</taxon>
        <taxon>Monodnaviria</taxon>
        <taxon>Shotokuvirae</taxon>
        <taxon>Cossaviricota</taxon>
        <taxon>Papovaviricetes</taxon>
        <taxon>Zurhausenvirales</taxon>
        <taxon>Papillomaviridae</taxon>
        <taxon>Firstpapillomavirinae</taxon>
        <taxon>Alphapapillomavirus</taxon>
        <taxon>Alphapapillomavirus 9</taxon>
    </lineage>
</organism>
<accession>P26535</accession>
<proteinExistence type="evidence at protein level"/>
<sequence length="524" mass="59038">MVLILCCTLAILFCVADVNVFHIFLQMSVWRPSEATVYLPPVPVSKVVSTDEYVSRTSIYYYAGSSRLLAVGNPYFSIKSPNNNKKVLVPKVSGLQYRVFRVRLPDPNKFGFPDTSFYNPDTQRLVWACVGLEIGRGQPLGVGVSGHPYLNKFDDTETSNRYPAQPGSDNRECLSMDYKQTQLCLIGCKPPTGEHWGKGVACNNNAAATDCPPLELFNSIIEDGDMVDTGFGCMDFGTLQANKSDVPIDICNSTCKYPDYLKMASEPYGDSLFFFLRREQMFVRHFFNRAGKLGEAVPDDLYIKGSGNTAVIQSSAFFPTPSGSIVTSESQLFNKPYWLQRAQGHNNGICWGNQLFVTVVDTTRSTNMTLCTEVTKEGTYKNDNFKEYVRHVEEYDLQFVFQLCKITLTAEIMTYIHTMDSNILEDWQFGLTPPPSASLQDTYRFVTSQAITCQKTAPPKEKEDPLNKYTFWEVNLKEKFSADLDQFPLGRKFLLQSGLKAKPRLKRSAPTTRAPSTKRKKVKK</sequence>
<name>VL1_HPV58</name>
<keyword id="KW-0002">3D-structure</keyword>
<keyword id="KW-0167">Capsid protein</keyword>
<keyword id="KW-1015">Disulfide bond</keyword>
<keyword id="KW-1048">Host nucleus</keyword>
<keyword id="KW-0945">Host-virus interaction</keyword>
<keyword id="KW-0426">Late protein</keyword>
<keyword id="KW-1145">T=7 icosahedral capsid protein</keyword>
<keyword id="KW-1161">Viral attachment to host cell</keyword>
<keyword id="KW-1162">Viral penetration into host cytoplasm</keyword>
<keyword id="KW-0946">Virion</keyword>
<keyword id="KW-1164">Virus endocytosis by host</keyword>
<keyword id="KW-1160">Virus entry into host cell</keyword>
<feature type="chain" id="PRO_0000133541" description="Major capsid protein L1">
    <location>
        <begin position="1"/>
        <end position="524"/>
    </location>
</feature>
<feature type="region of interest" description="Disordered" evidence="2">
    <location>
        <begin position="501"/>
        <end position="524"/>
    </location>
</feature>
<feature type="disulfide bond" description="Interchain (with C-453)" evidence="1">
    <location>
        <position position="202"/>
    </location>
</feature>
<feature type="disulfide bond" description="Interchain (with C-202)" evidence="1">
    <location>
        <position position="453"/>
    </location>
</feature>
<feature type="helix" evidence="5">
    <location>
        <begin position="50"/>
        <end position="52"/>
    </location>
</feature>
<feature type="strand" evidence="5">
    <location>
        <begin position="55"/>
        <end position="64"/>
    </location>
</feature>
<feature type="strand" evidence="5">
    <location>
        <begin position="68"/>
        <end position="75"/>
    </location>
</feature>
<feature type="strand" evidence="5">
    <location>
        <begin position="81"/>
        <end position="85"/>
    </location>
</feature>
<feature type="strand" evidence="6">
    <location>
        <begin position="87"/>
        <end position="89"/>
    </location>
</feature>
<feature type="strand" evidence="5">
    <location>
        <begin position="98"/>
        <end position="103"/>
    </location>
</feature>
<feature type="helix" evidence="5">
    <location>
        <begin position="107"/>
        <end position="109"/>
    </location>
</feature>
<feature type="turn" evidence="5">
    <location>
        <begin position="120"/>
        <end position="122"/>
    </location>
</feature>
<feature type="strand" evidence="5">
    <location>
        <begin position="123"/>
        <end position="136"/>
    </location>
</feature>
<feature type="strand" evidence="5">
    <location>
        <begin position="145"/>
        <end position="150"/>
    </location>
</feature>
<feature type="strand" evidence="5">
    <location>
        <begin position="172"/>
        <end position="176"/>
    </location>
</feature>
<feature type="strand" evidence="5">
    <location>
        <begin position="180"/>
        <end position="189"/>
    </location>
</feature>
<feature type="strand" evidence="5">
    <location>
        <begin position="192"/>
        <end position="198"/>
    </location>
</feature>
<feature type="strand" evidence="6">
    <location>
        <begin position="203"/>
        <end position="205"/>
    </location>
</feature>
<feature type="strand" evidence="5">
    <location>
        <begin position="214"/>
        <end position="220"/>
    </location>
</feature>
<feature type="strand" evidence="5">
    <location>
        <begin position="233"/>
        <end position="235"/>
    </location>
</feature>
<feature type="helix" evidence="5">
    <location>
        <begin position="236"/>
        <end position="239"/>
    </location>
</feature>
<feature type="turn" evidence="5">
    <location>
        <begin position="248"/>
        <end position="252"/>
    </location>
</feature>
<feature type="strand" evidence="5">
    <location>
        <begin position="253"/>
        <end position="258"/>
    </location>
</feature>
<feature type="helix" evidence="5">
    <location>
        <begin position="260"/>
        <end position="265"/>
    </location>
</feature>
<feature type="strand" evidence="5">
    <location>
        <begin position="266"/>
        <end position="268"/>
    </location>
</feature>
<feature type="strand" evidence="5">
    <location>
        <begin position="273"/>
        <end position="288"/>
    </location>
</feature>
<feature type="strand" evidence="5">
    <location>
        <begin position="291"/>
        <end position="295"/>
    </location>
</feature>
<feature type="helix" evidence="5">
    <location>
        <begin position="299"/>
        <end position="301"/>
    </location>
</feature>
<feature type="helix" evidence="5">
    <location>
        <begin position="307"/>
        <end position="309"/>
    </location>
</feature>
<feature type="strand" evidence="5">
    <location>
        <begin position="317"/>
        <end position="322"/>
    </location>
</feature>
<feature type="helix" evidence="5">
    <location>
        <begin position="328"/>
        <end position="330"/>
    </location>
</feature>
<feature type="strand" evidence="5">
    <location>
        <begin position="333"/>
        <end position="338"/>
    </location>
</feature>
<feature type="strand" evidence="5">
    <location>
        <begin position="343"/>
        <end position="345"/>
    </location>
</feature>
<feature type="strand" evidence="4">
    <location>
        <begin position="348"/>
        <end position="350"/>
    </location>
</feature>
<feature type="helix" evidence="5">
    <location>
        <begin position="351"/>
        <end position="353"/>
    </location>
</feature>
<feature type="strand" evidence="5">
    <location>
        <begin position="354"/>
        <end position="361"/>
    </location>
</feature>
<feature type="strand" evidence="5">
    <location>
        <begin position="368"/>
        <end position="375"/>
    </location>
</feature>
<feature type="helix" evidence="5">
    <location>
        <begin position="382"/>
        <end position="384"/>
    </location>
</feature>
<feature type="strand" evidence="5">
    <location>
        <begin position="385"/>
        <end position="407"/>
    </location>
</feature>
<feature type="helix" evidence="5">
    <location>
        <begin position="410"/>
        <end position="419"/>
    </location>
</feature>
<feature type="helix" evidence="5">
    <location>
        <begin position="421"/>
        <end position="427"/>
    </location>
</feature>
<feature type="helix" evidence="5">
    <location>
        <begin position="465"/>
        <end position="468"/>
    </location>
</feature>
<feature type="strand" evidence="5">
    <location>
        <begin position="472"/>
        <end position="475"/>
    </location>
</feature>
<feature type="turn" evidence="5">
    <location>
        <begin position="477"/>
        <end position="479"/>
    </location>
</feature>
<feature type="strand" evidence="4">
    <location>
        <begin position="480"/>
        <end position="482"/>
    </location>
</feature>
<feature type="helix" evidence="5">
    <location>
        <begin position="484"/>
        <end position="486"/>
    </location>
</feature>
<feature type="helix" evidence="5">
    <location>
        <begin position="488"/>
        <end position="497"/>
    </location>
</feature>
<protein>
    <recommendedName>
        <fullName evidence="1">Major capsid protein L1</fullName>
    </recommendedName>
</protein>
<comment type="function">
    <text evidence="1 3">Forms an icosahedral capsid with a T=7 symmetry and a 50 nm diameter. The capsid is composed of 72 pentamers linked to each other by disulfide bonds and associated with L2 proteins. Binds to heparan sulfate proteoglycans on cell surface of basal layer keratinocytes to provide initial virion attachment. This binding mediates a conformational change in the virus capsid that facilitates efficient infection. The virion enters the host cell via endocytosis. During virus trafficking, L1 protein dissociates from the viral DNA and the genomic DNA is released to the host nucleus. The virion assembly takes place within the cell nucleus. Encapsulates the genomic DNA together with protein L2.</text>
</comment>
<comment type="subunit">
    <text evidence="1">Self-assembles into homopentamers. The capsid has an icosahedral symmetry and consists of 72 capsomers, with each capsomer being a pentamer of L1. Interacts with the minor capsid protein L2; this interaction is necessary for viral genome encapsidation. Interacts with protein E2; this interaction enhances E2-dependent replication and transcription activation.</text>
</comment>
<comment type="subcellular location">
    <subcellularLocation>
        <location evidence="1">Virion</location>
    </subcellularLocation>
    <subcellularLocation>
        <location evidence="1">Host nucleus</location>
    </subcellularLocation>
</comment>
<comment type="similarity">
    <text evidence="1">Belongs to the papillomaviridae L1 protein family.</text>
</comment>
<reference key="1">
    <citation type="journal article" date="1991" name="Virology">
        <title>Human papillomavirus type 58 DNA sequence.</title>
        <authorList>
            <person name="Kirii Y."/>
            <person name="Iwamoto S."/>
            <person name="Matsukura T."/>
        </authorList>
    </citation>
    <scope>NUCLEOTIDE SEQUENCE [GENOMIC DNA]</scope>
</reference>
<reference key="2">
    <citation type="journal article" date="2003" name="J. Virol.">
        <title>Human papillomavirus types 16, 31, and 58 use different endocytosis pathways to enter cells.</title>
        <authorList>
            <person name="Bousarghin L."/>
            <person name="Touze A."/>
            <person name="Sizaret P.Y."/>
            <person name="Coursaget P."/>
        </authorList>
    </citation>
    <scope>FUNCTION</scope>
</reference>